<feature type="chain" id="PRO_1000198447" description="UPF0325 protein YPK_1062">
    <location>
        <begin position="1"/>
        <end position="129"/>
    </location>
</feature>
<organism>
    <name type="scientific">Yersinia pseudotuberculosis serotype O:3 (strain YPIII)</name>
    <dbReference type="NCBI Taxonomy" id="502800"/>
    <lineage>
        <taxon>Bacteria</taxon>
        <taxon>Pseudomonadati</taxon>
        <taxon>Pseudomonadota</taxon>
        <taxon>Gammaproteobacteria</taxon>
        <taxon>Enterobacterales</taxon>
        <taxon>Yersiniaceae</taxon>
        <taxon>Yersinia</taxon>
    </lineage>
</organism>
<name>Y1062_YERPY</name>
<evidence type="ECO:0000255" key="1">
    <source>
        <dbReference type="HAMAP-Rule" id="MF_01519"/>
    </source>
</evidence>
<proteinExistence type="inferred from homology"/>
<protein>
    <recommendedName>
        <fullName evidence="1">UPF0325 protein YPK_1062</fullName>
    </recommendedName>
</protein>
<sequence length="129" mass="15232">MYDNLKSLGITQPEDVDRYSLRQEANNDILKIYFRKDKGEFFAKSVKFKYPRQRKTVVSDNASHGYKEINEINPNLRYVIDELDQLCKRDQIEVDLKRKILDDLRHLESVVTNKIAEIEADLEKLTNGR</sequence>
<gene>
    <name type="ordered locus">YPK_1062</name>
</gene>
<reference key="1">
    <citation type="submission" date="2008-02" db="EMBL/GenBank/DDBJ databases">
        <title>Complete sequence of Yersinia pseudotuberculosis YPIII.</title>
        <authorList>
            <consortium name="US DOE Joint Genome Institute"/>
            <person name="Copeland A."/>
            <person name="Lucas S."/>
            <person name="Lapidus A."/>
            <person name="Glavina del Rio T."/>
            <person name="Dalin E."/>
            <person name="Tice H."/>
            <person name="Bruce D."/>
            <person name="Goodwin L."/>
            <person name="Pitluck S."/>
            <person name="Munk A.C."/>
            <person name="Brettin T."/>
            <person name="Detter J.C."/>
            <person name="Han C."/>
            <person name="Tapia R."/>
            <person name="Schmutz J."/>
            <person name="Larimer F."/>
            <person name="Land M."/>
            <person name="Hauser L."/>
            <person name="Challacombe J.F."/>
            <person name="Green L."/>
            <person name="Lindler L.E."/>
            <person name="Nikolich M.P."/>
            <person name="Richardson P."/>
        </authorList>
    </citation>
    <scope>NUCLEOTIDE SEQUENCE [LARGE SCALE GENOMIC DNA]</scope>
    <source>
        <strain>YPIII</strain>
    </source>
</reference>
<accession>B1JQF6</accession>
<comment type="similarity">
    <text evidence="1">Belongs to the UPF0325 family.</text>
</comment>
<dbReference type="EMBL" id="CP000950">
    <property type="protein sequence ID" value="ACA67363.1"/>
    <property type="molecule type" value="Genomic_DNA"/>
</dbReference>
<dbReference type="RefSeq" id="WP_002212127.1">
    <property type="nucleotide sequence ID" value="NZ_CP009792.1"/>
</dbReference>
<dbReference type="SMR" id="B1JQF6"/>
<dbReference type="KEGG" id="ypy:YPK_1062"/>
<dbReference type="PATRIC" id="fig|502800.11.peg.1694"/>
<dbReference type="HAMAP" id="MF_01519">
    <property type="entry name" value="UPF0325"/>
    <property type="match status" value="1"/>
</dbReference>
<dbReference type="InterPro" id="IPR020911">
    <property type="entry name" value="UPF0325"/>
</dbReference>
<dbReference type="NCBIfam" id="NF010213">
    <property type="entry name" value="PRK13677.1"/>
    <property type="match status" value="1"/>
</dbReference>
<dbReference type="Pfam" id="PF11944">
    <property type="entry name" value="DUF3461"/>
    <property type="match status" value="1"/>
</dbReference>